<reference key="1">
    <citation type="journal article" date="2000" name="Nature">
        <title>Sequence and analysis of chromosome 1 of the plant Arabidopsis thaliana.</title>
        <authorList>
            <person name="Theologis A."/>
            <person name="Ecker J.R."/>
            <person name="Palm C.J."/>
            <person name="Federspiel N.A."/>
            <person name="Kaul S."/>
            <person name="White O."/>
            <person name="Alonso J."/>
            <person name="Altafi H."/>
            <person name="Araujo R."/>
            <person name="Bowman C.L."/>
            <person name="Brooks S.Y."/>
            <person name="Buehler E."/>
            <person name="Chan A."/>
            <person name="Chao Q."/>
            <person name="Chen H."/>
            <person name="Cheuk R.F."/>
            <person name="Chin C.W."/>
            <person name="Chung M.K."/>
            <person name="Conn L."/>
            <person name="Conway A.B."/>
            <person name="Conway A.R."/>
            <person name="Creasy T.H."/>
            <person name="Dewar K."/>
            <person name="Dunn P."/>
            <person name="Etgu P."/>
            <person name="Feldblyum T.V."/>
            <person name="Feng J.-D."/>
            <person name="Fong B."/>
            <person name="Fujii C.Y."/>
            <person name="Gill J.E."/>
            <person name="Goldsmith A.D."/>
            <person name="Haas B."/>
            <person name="Hansen N.F."/>
            <person name="Hughes B."/>
            <person name="Huizar L."/>
            <person name="Hunter J.L."/>
            <person name="Jenkins J."/>
            <person name="Johnson-Hopson C."/>
            <person name="Khan S."/>
            <person name="Khaykin E."/>
            <person name="Kim C.J."/>
            <person name="Koo H.L."/>
            <person name="Kremenetskaia I."/>
            <person name="Kurtz D.B."/>
            <person name="Kwan A."/>
            <person name="Lam B."/>
            <person name="Langin-Hooper S."/>
            <person name="Lee A."/>
            <person name="Lee J.M."/>
            <person name="Lenz C.A."/>
            <person name="Li J.H."/>
            <person name="Li Y.-P."/>
            <person name="Lin X."/>
            <person name="Liu S.X."/>
            <person name="Liu Z.A."/>
            <person name="Luros J.S."/>
            <person name="Maiti R."/>
            <person name="Marziali A."/>
            <person name="Militscher J."/>
            <person name="Miranda M."/>
            <person name="Nguyen M."/>
            <person name="Nierman W.C."/>
            <person name="Osborne B.I."/>
            <person name="Pai G."/>
            <person name="Peterson J."/>
            <person name="Pham P.K."/>
            <person name="Rizzo M."/>
            <person name="Rooney T."/>
            <person name="Rowley D."/>
            <person name="Sakano H."/>
            <person name="Salzberg S.L."/>
            <person name="Schwartz J.R."/>
            <person name="Shinn P."/>
            <person name="Southwick A.M."/>
            <person name="Sun H."/>
            <person name="Tallon L.J."/>
            <person name="Tambunga G."/>
            <person name="Toriumi M.J."/>
            <person name="Town C.D."/>
            <person name="Utterback T."/>
            <person name="Van Aken S."/>
            <person name="Vaysberg M."/>
            <person name="Vysotskaia V.S."/>
            <person name="Walker M."/>
            <person name="Wu D."/>
            <person name="Yu G."/>
            <person name="Fraser C.M."/>
            <person name="Venter J.C."/>
            <person name="Davis R.W."/>
        </authorList>
    </citation>
    <scope>NUCLEOTIDE SEQUENCE [LARGE SCALE GENOMIC DNA]</scope>
    <source>
        <strain>cv. Columbia</strain>
    </source>
</reference>
<reference key="2">
    <citation type="journal article" date="2017" name="Plant J.">
        <title>Araport11: a complete reannotation of the Arabidopsis thaliana reference genome.</title>
        <authorList>
            <person name="Cheng C.Y."/>
            <person name="Krishnakumar V."/>
            <person name="Chan A.P."/>
            <person name="Thibaud-Nissen F."/>
            <person name="Schobel S."/>
            <person name="Town C.D."/>
        </authorList>
    </citation>
    <scope>GENOME REANNOTATION</scope>
    <source>
        <strain>cv. Columbia</strain>
    </source>
</reference>
<reference key="3">
    <citation type="journal article" date="2003" name="Science">
        <title>Empirical analysis of transcriptional activity in the Arabidopsis genome.</title>
        <authorList>
            <person name="Yamada K."/>
            <person name="Lim J."/>
            <person name="Dale J.M."/>
            <person name="Chen H."/>
            <person name="Shinn P."/>
            <person name="Palm C.J."/>
            <person name="Southwick A.M."/>
            <person name="Wu H.C."/>
            <person name="Kim C.J."/>
            <person name="Nguyen M."/>
            <person name="Pham P.K."/>
            <person name="Cheuk R.F."/>
            <person name="Karlin-Newmann G."/>
            <person name="Liu S.X."/>
            <person name="Lam B."/>
            <person name="Sakano H."/>
            <person name="Wu T."/>
            <person name="Yu G."/>
            <person name="Miranda M."/>
            <person name="Quach H.L."/>
            <person name="Tripp M."/>
            <person name="Chang C.H."/>
            <person name="Lee J.M."/>
            <person name="Toriumi M.J."/>
            <person name="Chan M.M."/>
            <person name="Tang C.C."/>
            <person name="Onodera C.S."/>
            <person name="Deng J.M."/>
            <person name="Akiyama K."/>
            <person name="Ansari Y."/>
            <person name="Arakawa T."/>
            <person name="Banh J."/>
            <person name="Banno F."/>
            <person name="Bowser L."/>
            <person name="Brooks S.Y."/>
            <person name="Carninci P."/>
            <person name="Chao Q."/>
            <person name="Choy N."/>
            <person name="Enju A."/>
            <person name="Goldsmith A.D."/>
            <person name="Gurjal M."/>
            <person name="Hansen N.F."/>
            <person name="Hayashizaki Y."/>
            <person name="Johnson-Hopson C."/>
            <person name="Hsuan V.W."/>
            <person name="Iida K."/>
            <person name="Karnes M."/>
            <person name="Khan S."/>
            <person name="Koesema E."/>
            <person name="Ishida J."/>
            <person name="Jiang P.X."/>
            <person name="Jones T."/>
            <person name="Kawai J."/>
            <person name="Kamiya A."/>
            <person name="Meyers C."/>
            <person name="Nakajima M."/>
            <person name="Narusaka M."/>
            <person name="Seki M."/>
            <person name="Sakurai T."/>
            <person name="Satou M."/>
            <person name="Tamse R."/>
            <person name="Vaysberg M."/>
            <person name="Wallender E.K."/>
            <person name="Wong C."/>
            <person name="Yamamura Y."/>
            <person name="Yuan S."/>
            <person name="Shinozaki K."/>
            <person name="Davis R.W."/>
            <person name="Theologis A."/>
            <person name="Ecker J.R."/>
        </authorList>
    </citation>
    <scope>NUCLEOTIDE SEQUENCE [LARGE SCALE MRNA]</scope>
    <source>
        <strain>cv. Columbia</strain>
    </source>
</reference>
<reference key="4">
    <citation type="submission" date="2006-07" db="EMBL/GenBank/DDBJ databases">
        <title>Large-scale analysis of RIKEN Arabidopsis full-length (RAFL) cDNAs.</title>
        <authorList>
            <person name="Totoki Y."/>
            <person name="Seki M."/>
            <person name="Ishida J."/>
            <person name="Nakajima M."/>
            <person name="Enju A."/>
            <person name="Kamiya A."/>
            <person name="Narusaka M."/>
            <person name="Shin-i T."/>
            <person name="Nakagawa M."/>
            <person name="Sakamoto N."/>
            <person name="Oishi K."/>
            <person name="Kohara Y."/>
            <person name="Kobayashi M."/>
            <person name="Toyoda A."/>
            <person name="Sakaki Y."/>
            <person name="Sakurai T."/>
            <person name="Iida K."/>
            <person name="Akiyama K."/>
            <person name="Satou M."/>
            <person name="Toyoda T."/>
            <person name="Konagaya A."/>
            <person name="Carninci P."/>
            <person name="Kawai J."/>
            <person name="Hayashizaki Y."/>
            <person name="Shinozaki K."/>
        </authorList>
    </citation>
    <scope>NUCLEOTIDE SEQUENCE [LARGE SCALE MRNA] OF 167-800</scope>
    <source>
        <strain>cv. Columbia</strain>
    </source>
</reference>
<reference key="5">
    <citation type="journal article" date="2004" name="Plant Mol. Biol.">
        <title>Diversification of genes encoding mei2 -like RNA binding proteins in plants.</title>
        <authorList>
            <person name="Anderson G.H."/>
            <person name="Alvarez N.D."/>
            <person name="Gilman C."/>
            <person name="Jeffares D.C."/>
            <person name="Trainor V.C."/>
            <person name="Hanson M.R."/>
            <person name="Veit B."/>
        </authorList>
    </citation>
    <scope>GENE FAMILY</scope>
    <scope>DEVELOPMENTAL STAGE</scope>
</reference>
<reference key="6">
    <citation type="journal article" date="2005" name="BMC Plant Biol.">
        <title>The Arabidopsis Mei2 homologue AML1 binds AtRaptor1B, the plant homologue of a major regulator of eukaryotic cell growth.</title>
        <authorList>
            <person name="Anderson G.H."/>
            <person name="Hanson M.R."/>
        </authorList>
    </citation>
    <scope>FUNCTION</scope>
    <scope>DISRUPTION PHENOTYPE</scope>
</reference>
<reference key="7">
    <citation type="journal article" date="2006" name="Plant Cell">
        <title>The Arabidopsis-mei2-like genes play a role in meiosis and vegetative growth in Arabidopsis.</title>
        <authorList>
            <person name="Kaur J."/>
            <person name="Sebastian J."/>
            <person name="Siddiqi I."/>
        </authorList>
    </citation>
    <scope>FUNCTION</scope>
    <scope>TISSUE SPECIFICITY</scope>
</reference>
<reference key="8">
    <citation type="journal article" date="2009" name="J. Proteomics">
        <title>Phosphoproteomic analysis of nuclei-enriched fractions from Arabidopsis thaliana.</title>
        <authorList>
            <person name="Jones A.M.E."/>
            <person name="MacLean D."/>
            <person name="Studholme D.J."/>
            <person name="Serna-Sanz A."/>
            <person name="Andreasson E."/>
            <person name="Rathjen J.P."/>
            <person name="Peck S.C."/>
        </authorList>
    </citation>
    <scope>PHOSPHORYLATION [LARGE SCALE ANALYSIS] AT SER-789 AND SER-792</scope>
    <scope>IDENTIFICATION BY MASS SPECTROMETRY [LARGE SCALE ANALYSIS]</scope>
    <source>
        <strain>cv. Columbia</strain>
    </source>
</reference>
<reference key="9">
    <citation type="journal article" date="2009" name="Plant Physiol.">
        <title>Large-scale Arabidopsis phosphoproteome profiling reveals novel chloroplast kinase substrates and phosphorylation networks.</title>
        <authorList>
            <person name="Reiland S."/>
            <person name="Messerli G."/>
            <person name="Baerenfaller K."/>
            <person name="Gerrits B."/>
            <person name="Endler A."/>
            <person name="Grossmann J."/>
            <person name="Gruissem W."/>
            <person name="Baginsky S."/>
        </authorList>
    </citation>
    <scope>PHOSPHORYLATION [LARGE SCALE ANALYSIS] AT SER-384; SER-390 AND SER-792</scope>
    <scope>IDENTIFICATION BY MASS SPECTROMETRY [LARGE SCALE ANALYSIS]</scope>
</reference>
<feature type="chain" id="PRO_0000409345" description="Protein MEI2-like 5">
    <location>
        <begin position="1"/>
        <end position="800"/>
    </location>
</feature>
<feature type="domain" description="RRM 1" evidence="1">
    <location>
        <begin position="168"/>
        <end position="241"/>
    </location>
</feature>
<feature type="domain" description="RRM 2" evidence="1">
    <location>
        <begin position="253"/>
        <end position="326"/>
    </location>
</feature>
<feature type="region of interest" description="Disordered" evidence="2">
    <location>
        <begin position="470"/>
        <end position="489"/>
    </location>
</feature>
<feature type="region of interest" description="Disordered" evidence="2">
    <location>
        <begin position="776"/>
        <end position="800"/>
    </location>
</feature>
<feature type="compositionally biased region" description="Low complexity" evidence="2">
    <location>
        <begin position="471"/>
        <end position="488"/>
    </location>
</feature>
<feature type="modified residue" description="Phosphoserine" evidence="8">
    <location>
        <position position="384"/>
    </location>
</feature>
<feature type="modified residue" description="Phosphoserine" evidence="8">
    <location>
        <position position="390"/>
    </location>
</feature>
<feature type="modified residue" description="Phosphoserine" evidence="7">
    <location>
        <position position="789"/>
    </location>
</feature>
<feature type="modified residue" description="Phosphoserine" evidence="7 8">
    <location>
        <position position="792"/>
    </location>
</feature>
<proteinExistence type="evidence at protein level"/>
<organism>
    <name type="scientific">Arabidopsis thaliana</name>
    <name type="common">Mouse-ear cress</name>
    <dbReference type="NCBI Taxonomy" id="3702"/>
    <lineage>
        <taxon>Eukaryota</taxon>
        <taxon>Viridiplantae</taxon>
        <taxon>Streptophyta</taxon>
        <taxon>Embryophyta</taxon>
        <taxon>Tracheophyta</taxon>
        <taxon>Spermatophyta</taxon>
        <taxon>Magnoliopsida</taxon>
        <taxon>eudicotyledons</taxon>
        <taxon>Gunneridae</taxon>
        <taxon>Pentapetalae</taxon>
        <taxon>rosids</taxon>
        <taxon>malvids</taxon>
        <taxon>Brassicales</taxon>
        <taxon>Brassicaceae</taxon>
        <taxon>Camelineae</taxon>
        <taxon>Arabidopsis</taxon>
    </lineage>
</organism>
<comment type="function">
    <text evidence="4 5">Probable RNA-binding protein that plays a role in meiosis and vegetative growth.</text>
</comment>
<comment type="developmental stage">
    <text evidence="3">Expressed throughout the meristem during embryonic and vegetative development. Expressed in floral organogenic regions.</text>
</comment>
<comment type="disruption phenotype">
    <text evidence="4">Early flowering.</text>
</comment>
<comment type="sequence caution" evidence="6">
    <conflict type="erroneous gene model prediction">
        <sequence resource="EMBL-CDS" id="AAG51742"/>
    </conflict>
</comment>
<comment type="sequence caution" evidence="6">
    <conflict type="erroneous initiation">
        <sequence resource="EMBL-CDS" id="BAF02107"/>
    </conflict>
    <text>Truncated N-terminus.</text>
</comment>
<name>AML5_ARATH</name>
<keyword id="KW-0469">Meiosis</keyword>
<keyword id="KW-0597">Phosphoprotein</keyword>
<keyword id="KW-1185">Reference proteome</keyword>
<keyword id="KW-0677">Repeat</keyword>
<keyword id="KW-0694">RNA-binding</keyword>
<gene>
    <name type="primary">ML5</name>
    <name type="ordered locus">At1g29400</name>
    <name type="ORF">F15D2.30</name>
</gene>
<protein>
    <recommendedName>
        <fullName>Protein MEI2-like 5</fullName>
        <shortName>AML5</shortName>
    </recommendedName>
    <alternativeName>
        <fullName>MEI2-like protein 5</fullName>
    </alternativeName>
</protein>
<evidence type="ECO:0000255" key="1">
    <source>
        <dbReference type="PROSITE-ProRule" id="PRU00176"/>
    </source>
</evidence>
<evidence type="ECO:0000256" key="2">
    <source>
        <dbReference type="SAM" id="MobiDB-lite"/>
    </source>
</evidence>
<evidence type="ECO:0000269" key="3">
    <source>
    </source>
</evidence>
<evidence type="ECO:0000269" key="4">
    <source>
    </source>
</evidence>
<evidence type="ECO:0000269" key="5">
    <source>
    </source>
</evidence>
<evidence type="ECO:0000305" key="6"/>
<evidence type="ECO:0007744" key="7">
    <source>
    </source>
</evidence>
<evidence type="ECO:0007744" key="8">
    <source>
    </source>
</evidence>
<sequence>MDIPHEAEAGAWGILPGFGRHHHPSSDATLFSSSLPVFPRGKLQLSDNRDGFSLIDDTAVSRTNKFNESADDFESHSIGNLLPDEEDLLTGMMDDLDLGELPDADDYDLFGSGGGMELDADFRDNLSMSGPPRLSLSSLGGNAIPQFNIPNGAGTVAGEHPYGEHPSRTLFVRNINSNVEDSELTALFEQYGDIRTLYTTCKHRGFVMISYYDIRSARMAMRSLQNKPLRRRKLDIHFSIPKDNPSEKDMNQGTLVVFNLDPSISNDDLHGIFGAHGEIKEIRETPHKRHHKFVEFYDVRGAEAALKALNRCEIAGKRIKVEPSRPGGARRSLMLQLNQDLENDDLHYLPMIGSPMANSPPMQGNWPLNSPVEGSPLQSVLSRSPVFGLSPTRNGHLSGLASALNSQGPSSKLAPIGRGQIGSNGFQQSSHLFQEPKMDNKYTGNLSPSGPLISNGGGIETLSGSEFLWGSPNARSEPSSSSVWSTSSTGNPLFSTRVDRSVPFPHQHQNQSRSHHHFHVGSAPSGVPLEKHFGFVPESSKDALFMNTVGLQGMSGMGLNGGSFSSKMANNGIINSGSMAENGFSSYRMMSSPRFSPMFLSSGLNPGRFASGFDSLYENGRPRRVENNSNQVESRKQFQLDLEKILNGEDSRTTLMIKNIPNKYTSKMLLAAIDEKNQGTYNFLYLPIDFKNKCNVGYAFINMLNPELIIPFYEAFNGKKWEKFNSEKVASLAYARIQGKSALIAHFQNSSLMNEDMRCRPIIFDTPNNPESVEQVVDEESKNMDLLDSQLSDDDGRERS</sequence>
<accession>Q8VWF5</accession>
<accession>Q0WLA0</accession>
<accession>Q9C7R1</accession>
<dbReference type="EMBL" id="AC068667">
    <property type="protein sequence ID" value="AAG51742.1"/>
    <property type="status" value="ALT_SEQ"/>
    <property type="molecule type" value="Genomic_DNA"/>
</dbReference>
<dbReference type="EMBL" id="CP002684">
    <property type="protein sequence ID" value="AEE31082.1"/>
    <property type="molecule type" value="Genomic_DNA"/>
</dbReference>
<dbReference type="EMBL" id="CP002684">
    <property type="protein sequence ID" value="AEE31083.1"/>
    <property type="molecule type" value="Genomic_DNA"/>
</dbReference>
<dbReference type="EMBL" id="CP002684">
    <property type="protein sequence ID" value="ANM58035.1"/>
    <property type="molecule type" value="Genomic_DNA"/>
</dbReference>
<dbReference type="EMBL" id="AY062613">
    <property type="protein sequence ID" value="AAL32691.1"/>
    <property type="molecule type" value="mRNA"/>
</dbReference>
<dbReference type="EMBL" id="AY070368">
    <property type="protein sequence ID" value="AAL49866.1"/>
    <property type="molecule type" value="mRNA"/>
</dbReference>
<dbReference type="EMBL" id="AY091327">
    <property type="protein sequence ID" value="AAM14266.1"/>
    <property type="molecule type" value="mRNA"/>
</dbReference>
<dbReference type="EMBL" id="AK230306">
    <property type="protein sequence ID" value="BAF02107.1"/>
    <property type="status" value="ALT_INIT"/>
    <property type="molecule type" value="mRNA"/>
</dbReference>
<dbReference type="PIR" id="F86416">
    <property type="entry name" value="F86416"/>
</dbReference>
<dbReference type="RefSeq" id="NP_001320501.1">
    <property type="nucleotide sequence ID" value="NM_001332851.1"/>
</dbReference>
<dbReference type="RefSeq" id="NP_174233.2">
    <property type="nucleotide sequence ID" value="NM_102680.2"/>
</dbReference>
<dbReference type="RefSeq" id="NP_849727.1">
    <property type="nucleotide sequence ID" value="NM_179396.3"/>
</dbReference>
<dbReference type="SMR" id="Q8VWF5"/>
<dbReference type="BioGRID" id="25051">
    <property type="interactions" value="4"/>
</dbReference>
<dbReference type="FunCoup" id="Q8VWF5">
    <property type="interactions" value="487"/>
</dbReference>
<dbReference type="IntAct" id="Q8VWF5">
    <property type="interactions" value="3"/>
</dbReference>
<dbReference type="STRING" id="3702.Q8VWF5"/>
<dbReference type="GlyGen" id="Q8VWF5">
    <property type="glycosylation" value="2 sites, 1 O-linked glycan (2 sites)"/>
</dbReference>
<dbReference type="iPTMnet" id="Q8VWF5"/>
<dbReference type="PaxDb" id="3702-AT1G29400.2"/>
<dbReference type="ProteomicsDB" id="244904"/>
<dbReference type="EnsemblPlants" id="AT1G29400.1">
    <property type="protein sequence ID" value="AT1G29400.1"/>
    <property type="gene ID" value="AT1G29400"/>
</dbReference>
<dbReference type="EnsemblPlants" id="AT1G29400.2">
    <property type="protein sequence ID" value="AT1G29400.2"/>
    <property type="gene ID" value="AT1G29400"/>
</dbReference>
<dbReference type="EnsemblPlants" id="AT1G29400.3">
    <property type="protein sequence ID" value="AT1G29400.3"/>
    <property type="gene ID" value="AT1G29400"/>
</dbReference>
<dbReference type="GeneID" id="839816"/>
<dbReference type="Gramene" id="AT1G29400.1">
    <property type="protein sequence ID" value="AT1G29400.1"/>
    <property type="gene ID" value="AT1G29400"/>
</dbReference>
<dbReference type="Gramene" id="AT1G29400.2">
    <property type="protein sequence ID" value="AT1G29400.2"/>
    <property type="gene ID" value="AT1G29400"/>
</dbReference>
<dbReference type="Gramene" id="AT1G29400.3">
    <property type="protein sequence ID" value="AT1G29400.3"/>
    <property type="gene ID" value="AT1G29400"/>
</dbReference>
<dbReference type="KEGG" id="ath:AT1G29400"/>
<dbReference type="Araport" id="AT1G29400"/>
<dbReference type="TAIR" id="AT1G29400">
    <property type="gene designation" value="ML5"/>
</dbReference>
<dbReference type="eggNOG" id="KOG4660">
    <property type="taxonomic scope" value="Eukaryota"/>
</dbReference>
<dbReference type="HOGENOM" id="CLU_012447_0_0_1"/>
<dbReference type="InParanoid" id="Q8VWF5"/>
<dbReference type="OMA" id="KMANNGI"/>
<dbReference type="OrthoDB" id="417481at2759"/>
<dbReference type="PhylomeDB" id="Q8VWF5"/>
<dbReference type="PRO" id="PR:Q8VWF5"/>
<dbReference type="Proteomes" id="UP000006548">
    <property type="component" value="Chromosome 1"/>
</dbReference>
<dbReference type="ExpressionAtlas" id="Q8VWF5">
    <property type="expression patterns" value="baseline and differential"/>
</dbReference>
<dbReference type="GO" id="GO:0003729">
    <property type="term" value="F:mRNA binding"/>
    <property type="evidence" value="ECO:0000314"/>
    <property type="project" value="TAIR"/>
</dbReference>
<dbReference type="GO" id="GO:0051321">
    <property type="term" value="P:meiotic cell cycle"/>
    <property type="evidence" value="ECO:0007669"/>
    <property type="project" value="UniProtKB-KW"/>
</dbReference>
<dbReference type="GO" id="GO:0045927">
    <property type="term" value="P:positive regulation of growth"/>
    <property type="evidence" value="ECO:0000315"/>
    <property type="project" value="UniProtKB"/>
</dbReference>
<dbReference type="GO" id="GO:0045836">
    <property type="term" value="P:positive regulation of meiotic nuclear division"/>
    <property type="evidence" value="ECO:0000315"/>
    <property type="project" value="UniProtKB"/>
</dbReference>
<dbReference type="CDD" id="cd12524">
    <property type="entry name" value="RRM1_MEI2_like"/>
    <property type="match status" value="1"/>
</dbReference>
<dbReference type="CDD" id="cd12529">
    <property type="entry name" value="RRM2_MEI2_like"/>
    <property type="match status" value="1"/>
</dbReference>
<dbReference type="CDD" id="cd12531">
    <property type="entry name" value="RRM3_MEI2_like"/>
    <property type="match status" value="1"/>
</dbReference>
<dbReference type="FunFam" id="3.30.70.330:FF:000063">
    <property type="entry name" value="MEI2-like protein 5 isoform 2"/>
    <property type="match status" value="1"/>
</dbReference>
<dbReference type="FunFam" id="3.30.70.330:FF:000101">
    <property type="entry name" value="Protein MEI2-like 1"/>
    <property type="match status" value="1"/>
</dbReference>
<dbReference type="Gene3D" id="3.30.70.330">
    <property type="match status" value="2"/>
</dbReference>
<dbReference type="InterPro" id="IPR034453">
    <property type="entry name" value="MEI2-like_RRM1"/>
</dbReference>
<dbReference type="InterPro" id="IPR034454">
    <property type="entry name" value="MEI2-like_RRM3"/>
</dbReference>
<dbReference type="InterPro" id="IPR007201">
    <property type="entry name" value="Mei2-like_Rrm_C"/>
</dbReference>
<dbReference type="InterPro" id="IPR012677">
    <property type="entry name" value="Nucleotide-bd_a/b_plait_sf"/>
</dbReference>
<dbReference type="InterPro" id="IPR035979">
    <property type="entry name" value="RBD_domain_sf"/>
</dbReference>
<dbReference type="InterPro" id="IPR000504">
    <property type="entry name" value="RRM_dom"/>
</dbReference>
<dbReference type="PANTHER" id="PTHR23189">
    <property type="entry name" value="RNA RECOGNITION MOTIF-CONTAINING"/>
    <property type="match status" value="1"/>
</dbReference>
<dbReference type="Pfam" id="PF00076">
    <property type="entry name" value="RRM_1"/>
    <property type="match status" value="2"/>
</dbReference>
<dbReference type="Pfam" id="PF04059">
    <property type="entry name" value="RRM_2"/>
    <property type="match status" value="1"/>
</dbReference>
<dbReference type="SMART" id="SM00360">
    <property type="entry name" value="RRM"/>
    <property type="match status" value="3"/>
</dbReference>
<dbReference type="SUPFAM" id="SSF54928">
    <property type="entry name" value="RNA-binding domain, RBD"/>
    <property type="match status" value="2"/>
</dbReference>
<dbReference type="PROSITE" id="PS50102">
    <property type="entry name" value="RRM"/>
    <property type="match status" value="2"/>
</dbReference>